<protein>
    <recommendedName>
        <fullName evidence="1">Ribosome maturation factor RimP</fullName>
    </recommendedName>
</protein>
<feature type="chain" id="PRO_0000384738" description="Ribosome maturation factor RimP">
    <location>
        <begin position="1"/>
        <end position="158"/>
    </location>
</feature>
<dbReference type="EMBL" id="AM181176">
    <property type="protein sequence ID" value="CAY52354.1"/>
    <property type="status" value="ALT_INIT"/>
    <property type="molecule type" value="Genomic_DNA"/>
</dbReference>
<dbReference type="SMR" id="C3K261"/>
<dbReference type="STRING" id="294.SRM1_00824"/>
<dbReference type="eggNOG" id="COG0779">
    <property type="taxonomic scope" value="Bacteria"/>
</dbReference>
<dbReference type="HOGENOM" id="CLU_070525_1_1_6"/>
<dbReference type="GO" id="GO:0005829">
    <property type="term" value="C:cytosol"/>
    <property type="evidence" value="ECO:0007669"/>
    <property type="project" value="TreeGrafter"/>
</dbReference>
<dbReference type="GO" id="GO:0000028">
    <property type="term" value="P:ribosomal small subunit assembly"/>
    <property type="evidence" value="ECO:0007669"/>
    <property type="project" value="TreeGrafter"/>
</dbReference>
<dbReference type="GO" id="GO:0006412">
    <property type="term" value="P:translation"/>
    <property type="evidence" value="ECO:0007669"/>
    <property type="project" value="TreeGrafter"/>
</dbReference>
<dbReference type="CDD" id="cd01734">
    <property type="entry name" value="YlxS_C"/>
    <property type="match status" value="1"/>
</dbReference>
<dbReference type="FunFam" id="3.30.300.70:FF:000001">
    <property type="entry name" value="Ribosome maturation factor RimP"/>
    <property type="match status" value="1"/>
</dbReference>
<dbReference type="Gene3D" id="2.30.30.180">
    <property type="entry name" value="Ribosome maturation factor RimP, C-terminal domain"/>
    <property type="match status" value="1"/>
</dbReference>
<dbReference type="Gene3D" id="3.30.300.70">
    <property type="entry name" value="RimP-like superfamily, N-terminal"/>
    <property type="match status" value="1"/>
</dbReference>
<dbReference type="HAMAP" id="MF_01077">
    <property type="entry name" value="RimP"/>
    <property type="match status" value="1"/>
</dbReference>
<dbReference type="InterPro" id="IPR003728">
    <property type="entry name" value="Ribosome_maturation_RimP"/>
</dbReference>
<dbReference type="InterPro" id="IPR028998">
    <property type="entry name" value="RimP_C"/>
</dbReference>
<dbReference type="InterPro" id="IPR036847">
    <property type="entry name" value="RimP_C_sf"/>
</dbReference>
<dbReference type="InterPro" id="IPR028989">
    <property type="entry name" value="RimP_N"/>
</dbReference>
<dbReference type="InterPro" id="IPR035956">
    <property type="entry name" value="RimP_N_sf"/>
</dbReference>
<dbReference type="NCBIfam" id="NF000927">
    <property type="entry name" value="PRK00092.1-1"/>
    <property type="match status" value="1"/>
</dbReference>
<dbReference type="PANTHER" id="PTHR33867">
    <property type="entry name" value="RIBOSOME MATURATION FACTOR RIMP"/>
    <property type="match status" value="1"/>
</dbReference>
<dbReference type="PANTHER" id="PTHR33867:SF1">
    <property type="entry name" value="RIBOSOME MATURATION FACTOR RIMP"/>
    <property type="match status" value="1"/>
</dbReference>
<dbReference type="Pfam" id="PF17384">
    <property type="entry name" value="DUF150_C"/>
    <property type="match status" value="1"/>
</dbReference>
<dbReference type="Pfam" id="PF02576">
    <property type="entry name" value="RimP_N"/>
    <property type="match status" value="1"/>
</dbReference>
<dbReference type="SUPFAM" id="SSF74942">
    <property type="entry name" value="YhbC-like, C-terminal domain"/>
    <property type="match status" value="1"/>
</dbReference>
<dbReference type="SUPFAM" id="SSF75420">
    <property type="entry name" value="YhbC-like, N-terminal domain"/>
    <property type="match status" value="1"/>
</dbReference>
<keyword id="KW-0963">Cytoplasm</keyword>
<keyword id="KW-0690">Ribosome biogenesis</keyword>
<evidence type="ECO:0000255" key="1">
    <source>
        <dbReference type="HAMAP-Rule" id="MF_01077"/>
    </source>
</evidence>
<evidence type="ECO:0000305" key="2"/>
<sequence>MHEGVQVSSKLEELQALLAPVVVALGYECWGIEFSAQGRHSMLRVYIDKEGGVLVDDCAIVSRQISGVLDVEDPISVEYTLEVSSPGMERPLFTIDQFAKFAGEQVKIKLRSPFEGRRNFQGLLRGVEEQDVVVQVEDHEFLLPIDMIDKANIIPSFD</sequence>
<comment type="function">
    <text evidence="1">Required for maturation of 30S ribosomal subunits.</text>
</comment>
<comment type="subcellular location">
    <subcellularLocation>
        <location evidence="1">Cytoplasm</location>
    </subcellularLocation>
</comment>
<comment type="similarity">
    <text evidence="1">Belongs to the RimP family.</text>
</comment>
<comment type="sequence caution" evidence="2">
    <conflict type="erroneous initiation">
        <sequence resource="EMBL-CDS" id="CAY52354"/>
    </conflict>
</comment>
<organism>
    <name type="scientific">Pseudomonas fluorescens (strain SBW25)</name>
    <dbReference type="NCBI Taxonomy" id="216595"/>
    <lineage>
        <taxon>Bacteria</taxon>
        <taxon>Pseudomonadati</taxon>
        <taxon>Pseudomonadota</taxon>
        <taxon>Gammaproteobacteria</taxon>
        <taxon>Pseudomonadales</taxon>
        <taxon>Pseudomonadaceae</taxon>
        <taxon>Pseudomonas</taxon>
    </lineage>
</organism>
<gene>
    <name evidence="1" type="primary">rimP</name>
    <name type="ordered locus">PFLU_5255</name>
</gene>
<reference key="1">
    <citation type="journal article" date="2009" name="Genome Biol.">
        <title>Genomic and genetic analyses of diversity and plant interactions of Pseudomonas fluorescens.</title>
        <authorList>
            <person name="Silby M.W."/>
            <person name="Cerdeno-Tarraga A.M."/>
            <person name="Vernikos G.S."/>
            <person name="Giddens S.R."/>
            <person name="Jackson R.W."/>
            <person name="Preston G.M."/>
            <person name="Zhang X.-X."/>
            <person name="Moon C.D."/>
            <person name="Gehrig S.M."/>
            <person name="Godfrey S.A.C."/>
            <person name="Knight C.G."/>
            <person name="Malone J.G."/>
            <person name="Robinson Z."/>
            <person name="Spiers A.J."/>
            <person name="Harris S."/>
            <person name="Challis G.L."/>
            <person name="Yaxley A.M."/>
            <person name="Harris D."/>
            <person name="Seeger K."/>
            <person name="Murphy L."/>
            <person name="Rutter S."/>
            <person name="Squares R."/>
            <person name="Quail M.A."/>
            <person name="Saunders E."/>
            <person name="Mavromatis K."/>
            <person name="Brettin T.S."/>
            <person name="Bentley S.D."/>
            <person name="Hothersall J."/>
            <person name="Stephens E."/>
            <person name="Thomas C.M."/>
            <person name="Parkhill J."/>
            <person name="Levy S.B."/>
            <person name="Rainey P.B."/>
            <person name="Thomson N.R."/>
        </authorList>
    </citation>
    <scope>NUCLEOTIDE SEQUENCE [LARGE SCALE GENOMIC DNA]</scope>
    <source>
        <strain>SBW25</strain>
    </source>
</reference>
<accession>C3K261</accession>
<name>RIMP_PSEFS</name>
<proteinExistence type="inferred from homology"/>